<protein>
    <recommendedName>
        <fullName evidence="1">Glutamate--tRNA ligase</fullName>
        <ecNumber evidence="1">6.1.1.17</ecNumber>
    </recommendedName>
    <alternativeName>
        <fullName evidence="1">Glutamyl-tRNA synthetase</fullName>
        <shortName evidence="1">GluRS</shortName>
    </alternativeName>
</protein>
<dbReference type="EC" id="6.1.1.17" evidence="1"/>
<dbReference type="EMBL" id="CU207211">
    <property type="protein sequence ID" value="CAL61164.1"/>
    <property type="molecule type" value="Genomic_DNA"/>
</dbReference>
<dbReference type="SMR" id="A4G3S7"/>
<dbReference type="STRING" id="204773.HEAR0981"/>
<dbReference type="KEGG" id="har:HEAR0981"/>
<dbReference type="eggNOG" id="COG0008">
    <property type="taxonomic scope" value="Bacteria"/>
</dbReference>
<dbReference type="HOGENOM" id="CLU_015768_6_0_4"/>
<dbReference type="OrthoDB" id="9807503at2"/>
<dbReference type="Proteomes" id="UP000006697">
    <property type="component" value="Chromosome"/>
</dbReference>
<dbReference type="GO" id="GO:0005829">
    <property type="term" value="C:cytosol"/>
    <property type="evidence" value="ECO:0007669"/>
    <property type="project" value="TreeGrafter"/>
</dbReference>
<dbReference type="GO" id="GO:0005524">
    <property type="term" value="F:ATP binding"/>
    <property type="evidence" value="ECO:0007669"/>
    <property type="project" value="UniProtKB-UniRule"/>
</dbReference>
<dbReference type="GO" id="GO:0004818">
    <property type="term" value="F:glutamate-tRNA ligase activity"/>
    <property type="evidence" value="ECO:0007669"/>
    <property type="project" value="UniProtKB-UniRule"/>
</dbReference>
<dbReference type="GO" id="GO:0000049">
    <property type="term" value="F:tRNA binding"/>
    <property type="evidence" value="ECO:0007669"/>
    <property type="project" value="InterPro"/>
</dbReference>
<dbReference type="GO" id="GO:0008270">
    <property type="term" value="F:zinc ion binding"/>
    <property type="evidence" value="ECO:0007669"/>
    <property type="project" value="InterPro"/>
</dbReference>
<dbReference type="GO" id="GO:0006424">
    <property type="term" value="P:glutamyl-tRNA aminoacylation"/>
    <property type="evidence" value="ECO:0007669"/>
    <property type="project" value="UniProtKB-UniRule"/>
</dbReference>
<dbReference type="CDD" id="cd00808">
    <property type="entry name" value="GluRS_core"/>
    <property type="match status" value="1"/>
</dbReference>
<dbReference type="FunFam" id="3.40.50.620:FF:000007">
    <property type="entry name" value="Glutamate--tRNA ligase"/>
    <property type="match status" value="1"/>
</dbReference>
<dbReference type="Gene3D" id="1.10.10.350">
    <property type="match status" value="1"/>
</dbReference>
<dbReference type="Gene3D" id="3.40.50.620">
    <property type="entry name" value="HUPs"/>
    <property type="match status" value="1"/>
</dbReference>
<dbReference type="HAMAP" id="MF_00022">
    <property type="entry name" value="Glu_tRNA_synth_type1"/>
    <property type="match status" value="1"/>
</dbReference>
<dbReference type="InterPro" id="IPR045462">
    <property type="entry name" value="aa-tRNA-synth_I_cd-bd"/>
</dbReference>
<dbReference type="InterPro" id="IPR020751">
    <property type="entry name" value="aa-tRNA-synth_I_codon-bd_sub2"/>
</dbReference>
<dbReference type="InterPro" id="IPR001412">
    <property type="entry name" value="aa-tRNA-synth_I_CS"/>
</dbReference>
<dbReference type="InterPro" id="IPR008925">
    <property type="entry name" value="aa_tRNA-synth_I_cd-bd_sf"/>
</dbReference>
<dbReference type="InterPro" id="IPR004527">
    <property type="entry name" value="Glu-tRNA-ligase_bac/mito"/>
</dbReference>
<dbReference type="InterPro" id="IPR000924">
    <property type="entry name" value="Glu/Gln-tRNA-synth"/>
</dbReference>
<dbReference type="InterPro" id="IPR020058">
    <property type="entry name" value="Glu/Gln-tRNA-synth_Ib_cat-dom"/>
</dbReference>
<dbReference type="InterPro" id="IPR049940">
    <property type="entry name" value="GluQ/Sye"/>
</dbReference>
<dbReference type="InterPro" id="IPR033910">
    <property type="entry name" value="GluRS_core"/>
</dbReference>
<dbReference type="InterPro" id="IPR014729">
    <property type="entry name" value="Rossmann-like_a/b/a_fold"/>
</dbReference>
<dbReference type="NCBIfam" id="TIGR00464">
    <property type="entry name" value="gltX_bact"/>
    <property type="match status" value="1"/>
</dbReference>
<dbReference type="PANTHER" id="PTHR43311">
    <property type="entry name" value="GLUTAMATE--TRNA LIGASE"/>
    <property type="match status" value="1"/>
</dbReference>
<dbReference type="PANTHER" id="PTHR43311:SF2">
    <property type="entry name" value="GLUTAMATE--TRNA LIGASE, MITOCHONDRIAL-RELATED"/>
    <property type="match status" value="1"/>
</dbReference>
<dbReference type="Pfam" id="PF19269">
    <property type="entry name" value="Anticodon_2"/>
    <property type="match status" value="1"/>
</dbReference>
<dbReference type="Pfam" id="PF00749">
    <property type="entry name" value="tRNA-synt_1c"/>
    <property type="match status" value="1"/>
</dbReference>
<dbReference type="PRINTS" id="PR00987">
    <property type="entry name" value="TRNASYNTHGLU"/>
</dbReference>
<dbReference type="SUPFAM" id="SSF48163">
    <property type="entry name" value="An anticodon-binding domain of class I aminoacyl-tRNA synthetases"/>
    <property type="match status" value="1"/>
</dbReference>
<dbReference type="SUPFAM" id="SSF52374">
    <property type="entry name" value="Nucleotidylyl transferase"/>
    <property type="match status" value="1"/>
</dbReference>
<dbReference type="PROSITE" id="PS00178">
    <property type="entry name" value="AA_TRNA_LIGASE_I"/>
    <property type="match status" value="1"/>
</dbReference>
<proteinExistence type="inferred from homology"/>
<name>SYE_HERAR</name>
<gene>
    <name evidence="1" type="primary">gltX</name>
    <name type="ordered locus">HEAR0981</name>
</gene>
<evidence type="ECO:0000255" key="1">
    <source>
        <dbReference type="HAMAP-Rule" id="MF_00022"/>
    </source>
</evidence>
<organism>
    <name type="scientific">Herminiimonas arsenicoxydans</name>
    <dbReference type="NCBI Taxonomy" id="204773"/>
    <lineage>
        <taxon>Bacteria</taxon>
        <taxon>Pseudomonadati</taxon>
        <taxon>Pseudomonadota</taxon>
        <taxon>Betaproteobacteria</taxon>
        <taxon>Burkholderiales</taxon>
        <taxon>Oxalobacteraceae</taxon>
        <taxon>Herminiimonas</taxon>
    </lineage>
</organism>
<reference key="1">
    <citation type="journal article" date="2007" name="PLoS Genet.">
        <title>A tale of two oxidation states: bacterial colonization of arsenic-rich environments.</title>
        <authorList>
            <person name="Muller D."/>
            <person name="Medigue C."/>
            <person name="Koechler S."/>
            <person name="Barbe V."/>
            <person name="Barakat M."/>
            <person name="Talla E."/>
            <person name="Bonnefoy V."/>
            <person name="Krin E."/>
            <person name="Arsene-Ploetze F."/>
            <person name="Carapito C."/>
            <person name="Chandler M."/>
            <person name="Cournoyer B."/>
            <person name="Cruveiller S."/>
            <person name="Dossat C."/>
            <person name="Duval S."/>
            <person name="Heymann M."/>
            <person name="Leize E."/>
            <person name="Lieutaud A."/>
            <person name="Lievremont D."/>
            <person name="Makita Y."/>
            <person name="Mangenot S."/>
            <person name="Nitschke W."/>
            <person name="Ortet P."/>
            <person name="Perdrial N."/>
            <person name="Schoepp B."/>
            <person name="Siguier P."/>
            <person name="Simeonova D.D."/>
            <person name="Rouy Z."/>
            <person name="Segurens B."/>
            <person name="Turlin E."/>
            <person name="Vallenet D."/>
            <person name="van Dorsselaer A."/>
            <person name="Weiss S."/>
            <person name="Weissenbach J."/>
            <person name="Lett M.-C."/>
            <person name="Danchin A."/>
            <person name="Bertin P.N."/>
        </authorList>
    </citation>
    <scope>NUCLEOTIDE SEQUENCE [LARGE SCALE GENOMIC DNA]</scope>
    <source>
        <strain>ULPAs1</strain>
    </source>
</reference>
<feature type="chain" id="PRO_0000330974" description="Glutamate--tRNA ligase">
    <location>
        <begin position="1"/>
        <end position="467"/>
    </location>
</feature>
<feature type="short sequence motif" description="'HIGH' region" evidence="1">
    <location>
        <begin position="13"/>
        <end position="23"/>
    </location>
</feature>
<feature type="short sequence motif" description="'KMSKS' region" evidence="1">
    <location>
        <begin position="245"/>
        <end position="249"/>
    </location>
</feature>
<feature type="binding site" evidence="1">
    <location>
        <position position="248"/>
    </location>
    <ligand>
        <name>ATP</name>
        <dbReference type="ChEBI" id="CHEBI:30616"/>
    </ligand>
</feature>
<comment type="function">
    <text evidence="1">Catalyzes the attachment of glutamate to tRNA(Glu) in a two-step reaction: glutamate is first activated by ATP to form Glu-AMP and then transferred to the acceptor end of tRNA(Glu).</text>
</comment>
<comment type="catalytic activity">
    <reaction evidence="1">
        <text>tRNA(Glu) + L-glutamate + ATP = L-glutamyl-tRNA(Glu) + AMP + diphosphate</text>
        <dbReference type="Rhea" id="RHEA:23540"/>
        <dbReference type="Rhea" id="RHEA-COMP:9663"/>
        <dbReference type="Rhea" id="RHEA-COMP:9680"/>
        <dbReference type="ChEBI" id="CHEBI:29985"/>
        <dbReference type="ChEBI" id="CHEBI:30616"/>
        <dbReference type="ChEBI" id="CHEBI:33019"/>
        <dbReference type="ChEBI" id="CHEBI:78442"/>
        <dbReference type="ChEBI" id="CHEBI:78520"/>
        <dbReference type="ChEBI" id="CHEBI:456215"/>
        <dbReference type="EC" id="6.1.1.17"/>
    </reaction>
</comment>
<comment type="subunit">
    <text evidence="1">Monomer.</text>
</comment>
<comment type="subcellular location">
    <subcellularLocation>
        <location evidence="1">Cytoplasm</location>
    </subcellularLocation>
</comment>
<comment type="similarity">
    <text evidence="1">Belongs to the class-I aminoacyl-tRNA synthetase family. Glutamate--tRNA ligase type 1 subfamily.</text>
</comment>
<keyword id="KW-0030">Aminoacyl-tRNA synthetase</keyword>
<keyword id="KW-0067">ATP-binding</keyword>
<keyword id="KW-0963">Cytoplasm</keyword>
<keyword id="KW-0436">Ligase</keyword>
<keyword id="KW-0547">Nucleotide-binding</keyword>
<keyword id="KW-0648">Protein biosynthesis</keyword>
<keyword id="KW-1185">Reference proteome</keyword>
<accession>A4G3S7</accession>
<sequence length="467" mass="52411">MTARTPIRTRFAPSPTGYLHVGGARTALFSWAYARHFGGTFVLRIEDTDLERSTPEAVQAIIEGMEWLGLHHDEGPFYQMQRMDRYREVIAQMLAAGTAYYCYSSSEEVEAMRERQRAAGEKPRYDGTWRPEAGKTLPAIPADRKPVVRFRNPMEGDVTWLDVVKGQITISNRELDDLVIARQDGTPTYNFCVAVDDSDMKITHVIRGDDHVNNTPRQINILKALGAELPHYGHLPMILGADGAKLSKRHGAVSVMDYPAQGYLPEAMLNYLARLGWSHGDDEVFSMEQFTEWFDLDHLTKSPAQFDPEKLDWINNHYIKQADNTRLAGLIKPMMENLGAQFDNAPDLPAVIGLMKERVKTLNELAVTAMLFYRQPAPDAALLTQHLTDAVKPALAQYVEQLKTVAWGKDALSAALKEVLATHKLKMPQLAMPLRLIITGQLQTPSIDAVVELFGREVVLARIANYL</sequence>